<gene>
    <name type="primary">TEX36</name>
    <name type="synonym">C10orf122</name>
</gene>
<sequence length="186" mass="21545">MTKGRRFNPPSDKDGRWFPHIGLTQKTPESITSATSKEPQSPHLPRQAEGKLPPIYKVREKQAVNNQFPFSVHDNRHSLENSGCYLDSGLGRKKISPDKRQHVSRNFNLWACDYVPSCLDGFSNNQISYVYKEAMVVSSFRRFPRCYKEIWNAFTFLPERSYTEVLKKKPKVRFTVDKKVVSSLES</sequence>
<accession>Q5VZQ5</accession>
<accession>Q0P5T8</accession>
<proteinExistence type="evidence at protein level"/>
<name>TEX36_HUMAN</name>
<feature type="chain" id="PRO_0000244088" description="Testis-expressed protein 36">
    <location>
        <begin position="1"/>
        <end position="186"/>
    </location>
</feature>
<feature type="region of interest" description="Disordered" evidence="1">
    <location>
        <begin position="1"/>
        <end position="52"/>
    </location>
</feature>
<feature type="compositionally biased region" description="Polar residues" evidence="1">
    <location>
        <begin position="24"/>
        <end position="39"/>
    </location>
</feature>
<feature type="sequence variant" id="VAR_059615" description="In dbSNP:rs9422915.">
    <original>E</original>
    <variation>Q</variation>
    <location>
        <position position="38"/>
    </location>
</feature>
<organism>
    <name type="scientific">Homo sapiens</name>
    <name type="common">Human</name>
    <dbReference type="NCBI Taxonomy" id="9606"/>
    <lineage>
        <taxon>Eukaryota</taxon>
        <taxon>Metazoa</taxon>
        <taxon>Chordata</taxon>
        <taxon>Craniata</taxon>
        <taxon>Vertebrata</taxon>
        <taxon>Euteleostomi</taxon>
        <taxon>Mammalia</taxon>
        <taxon>Eutheria</taxon>
        <taxon>Euarchontoglires</taxon>
        <taxon>Primates</taxon>
        <taxon>Haplorrhini</taxon>
        <taxon>Catarrhini</taxon>
        <taxon>Hominidae</taxon>
        <taxon>Homo</taxon>
    </lineage>
</organism>
<reference key="1">
    <citation type="journal article" date="2004" name="Nature">
        <title>The DNA sequence and comparative analysis of human chromosome 10.</title>
        <authorList>
            <person name="Deloukas P."/>
            <person name="Earthrowl M.E."/>
            <person name="Grafham D.V."/>
            <person name="Rubenfield M."/>
            <person name="French L."/>
            <person name="Steward C.A."/>
            <person name="Sims S.K."/>
            <person name="Jones M.C."/>
            <person name="Searle S."/>
            <person name="Scott C."/>
            <person name="Howe K."/>
            <person name="Hunt S.E."/>
            <person name="Andrews T.D."/>
            <person name="Gilbert J.G.R."/>
            <person name="Swarbreck D."/>
            <person name="Ashurst J.L."/>
            <person name="Taylor A."/>
            <person name="Battles J."/>
            <person name="Bird C.P."/>
            <person name="Ainscough R."/>
            <person name="Almeida J.P."/>
            <person name="Ashwell R.I.S."/>
            <person name="Ambrose K.D."/>
            <person name="Babbage A.K."/>
            <person name="Bagguley C.L."/>
            <person name="Bailey J."/>
            <person name="Banerjee R."/>
            <person name="Bates K."/>
            <person name="Beasley H."/>
            <person name="Bray-Allen S."/>
            <person name="Brown A.J."/>
            <person name="Brown J.Y."/>
            <person name="Burford D.C."/>
            <person name="Burrill W."/>
            <person name="Burton J."/>
            <person name="Cahill P."/>
            <person name="Camire D."/>
            <person name="Carter N.P."/>
            <person name="Chapman J.C."/>
            <person name="Clark S.Y."/>
            <person name="Clarke G."/>
            <person name="Clee C.M."/>
            <person name="Clegg S."/>
            <person name="Corby N."/>
            <person name="Coulson A."/>
            <person name="Dhami P."/>
            <person name="Dutta I."/>
            <person name="Dunn M."/>
            <person name="Faulkner L."/>
            <person name="Frankish A."/>
            <person name="Frankland J.A."/>
            <person name="Garner P."/>
            <person name="Garnett J."/>
            <person name="Gribble S."/>
            <person name="Griffiths C."/>
            <person name="Grocock R."/>
            <person name="Gustafson E."/>
            <person name="Hammond S."/>
            <person name="Harley J.L."/>
            <person name="Hart E."/>
            <person name="Heath P.D."/>
            <person name="Ho T.P."/>
            <person name="Hopkins B."/>
            <person name="Horne J."/>
            <person name="Howden P.J."/>
            <person name="Huckle E."/>
            <person name="Hynds C."/>
            <person name="Johnson C."/>
            <person name="Johnson D."/>
            <person name="Kana A."/>
            <person name="Kay M."/>
            <person name="Kimberley A.M."/>
            <person name="Kershaw J.K."/>
            <person name="Kokkinaki M."/>
            <person name="Laird G.K."/>
            <person name="Lawlor S."/>
            <person name="Lee H.M."/>
            <person name="Leongamornlert D.A."/>
            <person name="Laird G."/>
            <person name="Lloyd C."/>
            <person name="Lloyd D.M."/>
            <person name="Loveland J."/>
            <person name="Lovell J."/>
            <person name="McLaren S."/>
            <person name="McLay K.E."/>
            <person name="McMurray A."/>
            <person name="Mashreghi-Mohammadi M."/>
            <person name="Matthews L."/>
            <person name="Milne S."/>
            <person name="Nickerson T."/>
            <person name="Nguyen M."/>
            <person name="Overton-Larty E."/>
            <person name="Palmer S.A."/>
            <person name="Pearce A.V."/>
            <person name="Peck A.I."/>
            <person name="Pelan S."/>
            <person name="Phillimore B."/>
            <person name="Porter K."/>
            <person name="Rice C.M."/>
            <person name="Rogosin A."/>
            <person name="Ross M.T."/>
            <person name="Sarafidou T."/>
            <person name="Sehra H.K."/>
            <person name="Shownkeen R."/>
            <person name="Skuce C.D."/>
            <person name="Smith M."/>
            <person name="Standring L."/>
            <person name="Sycamore N."/>
            <person name="Tester J."/>
            <person name="Thorpe A."/>
            <person name="Torcasso W."/>
            <person name="Tracey A."/>
            <person name="Tromans A."/>
            <person name="Tsolas J."/>
            <person name="Wall M."/>
            <person name="Walsh J."/>
            <person name="Wang H."/>
            <person name="Weinstock K."/>
            <person name="West A.P."/>
            <person name="Willey D.L."/>
            <person name="Whitehead S.L."/>
            <person name="Wilming L."/>
            <person name="Wray P.W."/>
            <person name="Young L."/>
            <person name="Chen Y."/>
            <person name="Lovering R.C."/>
            <person name="Moschonas N.K."/>
            <person name="Siebert R."/>
            <person name="Fechtel K."/>
            <person name="Bentley D."/>
            <person name="Durbin R.M."/>
            <person name="Hubbard T."/>
            <person name="Doucette-Stamm L."/>
            <person name="Beck S."/>
            <person name="Smith D.R."/>
            <person name="Rogers J."/>
        </authorList>
    </citation>
    <scope>NUCLEOTIDE SEQUENCE [LARGE SCALE GENOMIC DNA]</scope>
</reference>
<reference key="2">
    <citation type="journal article" date="2004" name="Genome Res.">
        <title>The status, quality, and expansion of the NIH full-length cDNA project: the Mammalian Gene Collection (MGC).</title>
        <authorList>
            <consortium name="The MGC Project Team"/>
        </authorList>
    </citation>
    <scope>NUCLEOTIDE SEQUENCE [LARGE SCALE MRNA]</scope>
    <source>
        <tissue>Testis</tissue>
    </source>
</reference>
<keyword id="KW-1267">Proteomics identification</keyword>
<keyword id="KW-1185">Reference proteome</keyword>
<protein>
    <recommendedName>
        <fullName>Testis-expressed protein 36</fullName>
    </recommendedName>
</protein>
<dbReference type="EMBL" id="AL158835">
    <property type="status" value="NOT_ANNOTATED_CDS"/>
    <property type="molecule type" value="Genomic_DNA"/>
</dbReference>
<dbReference type="EMBL" id="BC062717">
    <property type="protein sequence ID" value="AAH62717.1"/>
    <property type="molecule type" value="mRNA"/>
</dbReference>
<dbReference type="CCDS" id="CCDS44493.1"/>
<dbReference type="RefSeq" id="NP_001121674.1">
    <property type="nucleotide sequence ID" value="NM_001128202.3"/>
</dbReference>
<dbReference type="RefSeq" id="NP_001305062.1">
    <property type="nucleotide sequence ID" value="NM_001318133.1"/>
</dbReference>
<dbReference type="BioGRID" id="132412">
    <property type="interactions" value="3"/>
</dbReference>
<dbReference type="FunCoup" id="Q5VZQ5">
    <property type="interactions" value="1"/>
</dbReference>
<dbReference type="IntAct" id="Q5VZQ5">
    <property type="interactions" value="2"/>
</dbReference>
<dbReference type="STRING" id="9606.ENSP00000357811"/>
<dbReference type="iPTMnet" id="Q5VZQ5"/>
<dbReference type="PhosphoSitePlus" id="Q5VZQ5"/>
<dbReference type="BioMuta" id="TEX36"/>
<dbReference type="DMDM" id="74747835"/>
<dbReference type="jPOST" id="Q5VZQ5"/>
<dbReference type="MassIVE" id="Q5VZQ5"/>
<dbReference type="PaxDb" id="9606-ENSP00000357811"/>
<dbReference type="PeptideAtlas" id="Q5VZQ5"/>
<dbReference type="ProteomicsDB" id="65716"/>
<dbReference type="Antibodypedia" id="70872">
    <property type="antibodies" value="7 antibodies from 5 providers"/>
</dbReference>
<dbReference type="DNASU" id="387718"/>
<dbReference type="Ensembl" id="ENST00000368821.4">
    <property type="protein sequence ID" value="ENSP00000357811.3"/>
    <property type="gene ID" value="ENSG00000175018.13"/>
</dbReference>
<dbReference type="GeneID" id="387718"/>
<dbReference type="KEGG" id="hsa:387718"/>
<dbReference type="MANE-Select" id="ENST00000368821.4">
    <property type="protein sequence ID" value="ENSP00000357811.3"/>
    <property type="RefSeq nucleotide sequence ID" value="NM_001128202.3"/>
    <property type="RefSeq protein sequence ID" value="NP_001121674.1"/>
</dbReference>
<dbReference type="UCSC" id="uc001lik.4">
    <property type="organism name" value="human"/>
</dbReference>
<dbReference type="AGR" id="HGNC:31653"/>
<dbReference type="CTD" id="387718"/>
<dbReference type="GeneCards" id="TEX36"/>
<dbReference type="HGNC" id="HGNC:31653">
    <property type="gene designation" value="TEX36"/>
</dbReference>
<dbReference type="HPA" id="ENSG00000175018">
    <property type="expression patterns" value="Tissue enriched (testis)"/>
</dbReference>
<dbReference type="neXtProt" id="NX_Q5VZQ5"/>
<dbReference type="OpenTargets" id="ENSG00000175018"/>
<dbReference type="PharmGKB" id="PA134969142"/>
<dbReference type="VEuPathDB" id="HostDB:ENSG00000175018"/>
<dbReference type="eggNOG" id="ENOG502S7MT">
    <property type="taxonomic scope" value="Eukaryota"/>
</dbReference>
<dbReference type="GeneTree" id="ENSGT00390000012491"/>
<dbReference type="HOGENOM" id="CLU_109426_0_0_1"/>
<dbReference type="InParanoid" id="Q5VZQ5"/>
<dbReference type="OMA" id="SWFPHIG"/>
<dbReference type="OrthoDB" id="10003408at2759"/>
<dbReference type="PAN-GO" id="Q5VZQ5">
    <property type="GO annotations" value="0 GO annotations based on evolutionary models"/>
</dbReference>
<dbReference type="PhylomeDB" id="Q5VZQ5"/>
<dbReference type="TreeFam" id="TF330936"/>
<dbReference type="PathwayCommons" id="Q5VZQ5"/>
<dbReference type="SignaLink" id="Q5VZQ5"/>
<dbReference type="BioGRID-ORCS" id="387718">
    <property type="hits" value="10 hits in 1140 CRISPR screens"/>
</dbReference>
<dbReference type="ChiTaRS" id="TEX36">
    <property type="organism name" value="human"/>
</dbReference>
<dbReference type="GenomeRNAi" id="387718"/>
<dbReference type="Pharos" id="Q5VZQ5">
    <property type="development level" value="Tdark"/>
</dbReference>
<dbReference type="PRO" id="PR:Q5VZQ5"/>
<dbReference type="Proteomes" id="UP000005640">
    <property type="component" value="Chromosome 10"/>
</dbReference>
<dbReference type="RNAct" id="Q5VZQ5">
    <property type="molecule type" value="protein"/>
</dbReference>
<dbReference type="Bgee" id="ENSG00000175018">
    <property type="expression patterns" value="Expressed in left testis and 26 other cell types or tissues"/>
</dbReference>
<dbReference type="ExpressionAtlas" id="Q5VZQ5">
    <property type="expression patterns" value="baseline and differential"/>
</dbReference>
<dbReference type="InterPro" id="IPR029369">
    <property type="entry name" value="HDNR"/>
</dbReference>
<dbReference type="PANTHER" id="PTHR35440">
    <property type="entry name" value="TESTIS-EXPRESSED PROTEIN 36"/>
    <property type="match status" value="1"/>
</dbReference>
<dbReference type="PANTHER" id="PTHR35440:SF1">
    <property type="entry name" value="TESTIS-EXPRESSED PROTEIN 36"/>
    <property type="match status" value="1"/>
</dbReference>
<dbReference type="Pfam" id="PF15115">
    <property type="entry name" value="HDNR"/>
    <property type="match status" value="1"/>
</dbReference>
<evidence type="ECO:0000256" key="1">
    <source>
        <dbReference type="SAM" id="MobiDB-lite"/>
    </source>
</evidence>